<gene>
    <name type="primary">PPY</name>
</gene>
<protein>
    <recommendedName>
        <fullName evidence="3">Pancreatic polypeptide</fullName>
        <shortName evidence="3">PP</shortName>
    </recommendedName>
</protein>
<keyword id="KW-0027">Amidation</keyword>
<keyword id="KW-0903">Direct protein sequencing</keyword>
<keyword id="KW-0372">Hormone</keyword>
<keyword id="KW-1185">Reference proteome</keyword>
<keyword id="KW-0964">Secreted</keyword>
<organism>
    <name type="scientific">Oryctolagus cuniculus</name>
    <name type="common">Rabbit</name>
    <dbReference type="NCBI Taxonomy" id="9986"/>
    <lineage>
        <taxon>Eukaryota</taxon>
        <taxon>Metazoa</taxon>
        <taxon>Chordata</taxon>
        <taxon>Craniata</taxon>
        <taxon>Vertebrata</taxon>
        <taxon>Euteleostomi</taxon>
        <taxon>Mammalia</taxon>
        <taxon>Eutheria</taxon>
        <taxon>Euarchontoglires</taxon>
        <taxon>Glires</taxon>
        <taxon>Lagomorpha</taxon>
        <taxon>Leporidae</taxon>
        <taxon>Oryctolagus</taxon>
    </lineage>
</organism>
<name>PAHO_RABIT</name>
<accession>P41336</accession>
<dbReference type="SMR" id="P41336"/>
<dbReference type="STRING" id="9986.ENSOCUP00000025326"/>
<dbReference type="PaxDb" id="9986-ENSOCUP00000025326"/>
<dbReference type="eggNOG" id="ENOG502TD4B">
    <property type="taxonomic scope" value="Eukaryota"/>
</dbReference>
<dbReference type="InParanoid" id="P41336"/>
<dbReference type="Proteomes" id="UP000001811">
    <property type="component" value="Unplaced"/>
</dbReference>
<dbReference type="GO" id="GO:0005615">
    <property type="term" value="C:extracellular space"/>
    <property type="evidence" value="ECO:0007669"/>
    <property type="project" value="TreeGrafter"/>
</dbReference>
<dbReference type="GO" id="GO:0005184">
    <property type="term" value="F:neuropeptide hormone activity"/>
    <property type="evidence" value="ECO:0007669"/>
    <property type="project" value="TreeGrafter"/>
</dbReference>
<dbReference type="GO" id="GO:0031841">
    <property type="term" value="F:neuropeptide Y receptor binding"/>
    <property type="evidence" value="ECO:0007669"/>
    <property type="project" value="TreeGrafter"/>
</dbReference>
<dbReference type="GO" id="GO:0007631">
    <property type="term" value="P:feeding behavior"/>
    <property type="evidence" value="ECO:0007669"/>
    <property type="project" value="TreeGrafter"/>
</dbReference>
<dbReference type="GO" id="GO:0007218">
    <property type="term" value="P:neuropeptide signaling pathway"/>
    <property type="evidence" value="ECO:0007669"/>
    <property type="project" value="TreeGrafter"/>
</dbReference>
<dbReference type="CDD" id="cd00126">
    <property type="entry name" value="PAH"/>
    <property type="match status" value="1"/>
</dbReference>
<dbReference type="Gene3D" id="6.10.250.900">
    <property type="match status" value="1"/>
</dbReference>
<dbReference type="InterPro" id="IPR001955">
    <property type="entry name" value="Pancreatic_hormone-like"/>
</dbReference>
<dbReference type="InterPro" id="IPR020392">
    <property type="entry name" value="Pancreatic_hormone-like_CS"/>
</dbReference>
<dbReference type="PANTHER" id="PTHR10533">
    <property type="entry name" value="NEUROPEPTIDE Y/PANCREATIC HORMONE/PEPTIDE YY"/>
    <property type="match status" value="1"/>
</dbReference>
<dbReference type="PANTHER" id="PTHR10533:SF2">
    <property type="entry name" value="PANCREATIC POLYPEPTIDE PROHORMONE"/>
    <property type="match status" value="1"/>
</dbReference>
<dbReference type="Pfam" id="PF00159">
    <property type="entry name" value="Hormone_3"/>
    <property type="match status" value="1"/>
</dbReference>
<dbReference type="PRINTS" id="PR00278">
    <property type="entry name" value="PANCHORMONE"/>
</dbReference>
<dbReference type="SMART" id="SM00309">
    <property type="entry name" value="PAH"/>
    <property type="match status" value="1"/>
</dbReference>
<dbReference type="PROSITE" id="PS00265">
    <property type="entry name" value="PANCREATIC_HORMONE_1"/>
    <property type="match status" value="1"/>
</dbReference>
<dbReference type="PROSITE" id="PS50276">
    <property type="entry name" value="PANCREATIC_HORMONE_2"/>
    <property type="match status" value="1"/>
</dbReference>
<proteinExistence type="evidence at protein level"/>
<reference key="1">
    <citation type="journal article" date="1993" name="Comp. Biochem. Physiol.">
        <title>Rabbit pancreatic polypeptide.</title>
        <authorList>
            <person name="Marks N.J."/>
            <person name="Shaw C."/>
            <person name="Halton D.W."/>
            <person name="Curry W.J."/>
            <person name="Thim L."/>
        </authorList>
    </citation>
    <scope>PROTEIN SEQUENCE</scope>
    <scope>AMIDATION AT TYR-36</scope>
    <source>
        <tissue>Pancreas</tissue>
    </source>
</reference>
<evidence type="ECO:0000250" key="1">
    <source>
        <dbReference type="UniProtKB" id="P01298"/>
    </source>
</evidence>
<evidence type="ECO:0000269" key="2">
    <source>
    </source>
</evidence>
<evidence type="ECO:0000303" key="3">
    <source>
    </source>
</evidence>
<evidence type="ECO:0000305" key="4"/>
<sequence length="36" mass="4197">APPEPVYPGDDATPEQMAEYVADLRRYINMLTRPRY</sequence>
<comment type="function">
    <text evidence="1">Hormone secreted by pancreatic cells that acts as a regulator of pancreatic and gastrointestinal functions probably by signaling through the G protein-coupled receptor NPY4R2.</text>
</comment>
<comment type="subcellular location">
    <subcellularLocation>
        <location evidence="1">Secreted</location>
    </subcellularLocation>
</comment>
<comment type="similarity">
    <text evidence="4">Belongs to the NPY family.</text>
</comment>
<feature type="peptide" id="PRO_0000044801" description="Pancreatic polypeptide">
    <location>
        <begin position="1"/>
        <end position="36"/>
    </location>
</feature>
<feature type="modified residue" description="Tyrosine amide" evidence="2">
    <location>
        <position position="36"/>
    </location>
</feature>